<keyword id="KW-0456">Lyase</keyword>
<keyword id="KW-0663">Pyridoxal phosphate</keyword>
<keyword id="KW-1185">Reference proteome</keyword>
<keyword id="KW-0704">Schiff base</keyword>
<proteinExistence type="inferred from homology"/>
<sequence>MEKVVGTDRVKQGMAQMQKGGVIMDVINAEQAKIAEEAGAVAVMALERVPSDIRAAGGVARMADPTVTEEVLNAVSIPVMAKARIGHIVEAKVLEAMGVDYIDESEVLTPADEVYHLNKRDFTVPFVCGARDLGEAARRIGEGASMIRTKGEPGTGNIVEAVRHMRKMQAQIKQVAHMSTDELMTEAKQLGAPYELLLHIKETGQLPVVNFAAGGIATPADAALMMHLGADGVFVGSGIFKSDNPEKFARAIVEATTHYTDYERIAELSKNLGSAMKGIDVATLAPAERMQDRGW</sequence>
<protein>
    <recommendedName>
        <fullName evidence="1">Pyridoxal 5'-phosphate synthase subunit PdxS</fullName>
        <shortName evidence="1">PLP synthase subunit PdxS</shortName>
        <ecNumber evidence="1">4.3.3.6</ecNumber>
    </recommendedName>
    <alternativeName>
        <fullName evidence="1">Pdx1</fullName>
    </alternativeName>
</protein>
<comment type="function">
    <text evidence="1">Catalyzes the formation of pyridoxal 5'-phosphate from ribose 5-phosphate (RBP), glyceraldehyde 3-phosphate (G3P) and ammonia. The ammonia is provided by the PdxT subunit. Can also use ribulose 5-phosphate and dihydroxyacetone phosphate as substrates, resulting from enzyme-catalyzed isomerization of RBP and G3P, respectively.</text>
</comment>
<comment type="catalytic activity">
    <reaction evidence="1">
        <text>aldehydo-D-ribose 5-phosphate + D-glyceraldehyde 3-phosphate + L-glutamine = pyridoxal 5'-phosphate + L-glutamate + phosphate + 3 H2O + H(+)</text>
        <dbReference type="Rhea" id="RHEA:31507"/>
        <dbReference type="ChEBI" id="CHEBI:15377"/>
        <dbReference type="ChEBI" id="CHEBI:15378"/>
        <dbReference type="ChEBI" id="CHEBI:29985"/>
        <dbReference type="ChEBI" id="CHEBI:43474"/>
        <dbReference type="ChEBI" id="CHEBI:58273"/>
        <dbReference type="ChEBI" id="CHEBI:58359"/>
        <dbReference type="ChEBI" id="CHEBI:59776"/>
        <dbReference type="ChEBI" id="CHEBI:597326"/>
        <dbReference type="EC" id="4.3.3.6"/>
    </reaction>
</comment>
<comment type="pathway">
    <text evidence="1">Cofactor biosynthesis; pyridoxal 5'-phosphate biosynthesis.</text>
</comment>
<comment type="subunit">
    <text evidence="1">In the presence of PdxT, forms a dodecamer of heterodimers.</text>
</comment>
<comment type="similarity">
    <text evidence="1">Belongs to the PdxS/SNZ family.</text>
</comment>
<reference key="1">
    <citation type="submission" date="2003-10" db="EMBL/GenBank/DDBJ databases">
        <title>The complete genome sequence of the alkaliphilic Bacillus clausii KSM-K16.</title>
        <authorList>
            <person name="Takaki Y."/>
            <person name="Kageyama Y."/>
            <person name="Shimamura S."/>
            <person name="Suzuki H."/>
            <person name="Nishi S."/>
            <person name="Hatada Y."/>
            <person name="Kawai S."/>
            <person name="Ito S."/>
            <person name="Horikoshi K."/>
        </authorList>
    </citation>
    <scope>NUCLEOTIDE SEQUENCE [LARGE SCALE GENOMIC DNA]</scope>
    <source>
        <strain>KSM-K16</strain>
    </source>
</reference>
<evidence type="ECO:0000255" key="1">
    <source>
        <dbReference type="HAMAP-Rule" id="MF_01824"/>
    </source>
</evidence>
<dbReference type="EC" id="4.3.3.6" evidence="1"/>
<dbReference type="EMBL" id="AP006627">
    <property type="protein sequence ID" value="BAD62993.1"/>
    <property type="molecule type" value="Genomic_DNA"/>
</dbReference>
<dbReference type="RefSeq" id="WP_011245312.1">
    <property type="nucleotide sequence ID" value="NC_006582.1"/>
</dbReference>
<dbReference type="SMR" id="Q5WKW2"/>
<dbReference type="STRING" id="66692.ABC0451"/>
<dbReference type="GeneID" id="86924505"/>
<dbReference type="KEGG" id="bcl:ABC0451"/>
<dbReference type="eggNOG" id="COG0214">
    <property type="taxonomic scope" value="Bacteria"/>
</dbReference>
<dbReference type="HOGENOM" id="CLU_055352_1_0_9"/>
<dbReference type="OrthoDB" id="9772545at2"/>
<dbReference type="UniPathway" id="UPA00245"/>
<dbReference type="Proteomes" id="UP000001168">
    <property type="component" value="Chromosome"/>
</dbReference>
<dbReference type="GO" id="GO:0036381">
    <property type="term" value="F:pyridoxal 5'-phosphate synthase (glutamine hydrolysing) activity"/>
    <property type="evidence" value="ECO:0007669"/>
    <property type="project" value="UniProtKB-UniRule"/>
</dbReference>
<dbReference type="GO" id="GO:0006520">
    <property type="term" value="P:amino acid metabolic process"/>
    <property type="evidence" value="ECO:0007669"/>
    <property type="project" value="TreeGrafter"/>
</dbReference>
<dbReference type="GO" id="GO:0042823">
    <property type="term" value="P:pyridoxal phosphate biosynthetic process"/>
    <property type="evidence" value="ECO:0007669"/>
    <property type="project" value="UniProtKB-UniRule"/>
</dbReference>
<dbReference type="GO" id="GO:0008615">
    <property type="term" value="P:pyridoxine biosynthetic process"/>
    <property type="evidence" value="ECO:0007669"/>
    <property type="project" value="TreeGrafter"/>
</dbReference>
<dbReference type="CDD" id="cd04727">
    <property type="entry name" value="pdxS"/>
    <property type="match status" value="1"/>
</dbReference>
<dbReference type="FunFam" id="3.20.20.70:FF:000001">
    <property type="entry name" value="Pyridoxine biosynthesis protein PDX1"/>
    <property type="match status" value="1"/>
</dbReference>
<dbReference type="Gene3D" id="3.20.20.70">
    <property type="entry name" value="Aldolase class I"/>
    <property type="match status" value="1"/>
</dbReference>
<dbReference type="HAMAP" id="MF_01824">
    <property type="entry name" value="PdxS"/>
    <property type="match status" value="1"/>
</dbReference>
<dbReference type="InterPro" id="IPR013785">
    <property type="entry name" value="Aldolase_TIM"/>
</dbReference>
<dbReference type="InterPro" id="IPR001852">
    <property type="entry name" value="PdxS/SNZ"/>
</dbReference>
<dbReference type="InterPro" id="IPR033755">
    <property type="entry name" value="PdxS/SNZ_N"/>
</dbReference>
<dbReference type="InterPro" id="IPR011060">
    <property type="entry name" value="RibuloseP-bd_barrel"/>
</dbReference>
<dbReference type="NCBIfam" id="NF003215">
    <property type="entry name" value="PRK04180.1"/>
    <property type="match status" value="1"/>
</dbReference>
<dbReference type="NCBIfam" id="TIGR00343">
    <property type="entry name" value="pyridoxal 5'-phosphate synthase lyase subunit PdxS"/>
    <property type="match status" value="1"/>
</dbReference>
<dbReference type="PANTHER" id="PTHR31829">
    <property type="entry name" value="PYRIDOXAL 5'-PHOSPHATE SYNTHASE SUBUNIT SNZ1-RELATED"/>
    <property type="match status" value="1"/>
</dbReference>
<dbReference type="PANTHER" id="PTHR31829:SF0">
    <property type="entry name" value="PYRIDOXAL 5'-PHOSPHATE SYNTHASE SUBUNIT SNZ1-RELATED"/>
    <property type="match status" value="1"/>
</dbReference>
<dbReference type="Pfam" id="PF01680">
    <property type="entry name" value="SOR_SNZ"/>
    <property type="match status" value="1"/>
</dbReference>
<dbReference type="PIRSF" id="PIRSF029271">
    <property type="entry name" value="Pdx1"/>
    <property type="match status" value="1"/>
</dbReference>
<dbReference type="SUPFAM" id="SSF51366">
    <property type="entry name" value="Ribulose-phoshate binding barrel"/>
    <property type="match status" value="1"/>
</dbReference>
<dbReference type="PROSITE" id="PS01235">
    <property type="entry name" value="PDXS_SNZ_1"/>
    <property type="match status" value="1"/>
</dbReference>
<dbReference type="PROSITE" id="PS51129">
    <property type="entry name" value="PDXS_SNZ_2"/>
    <property type="match status" value="1"/>
</dbReference>
<feature type="chain" id="PRO_0000109382" description="Pyridoxal 5'-phosphate synthase subunit PdxS">
    <location>
        <begin position="1"/>
        <end position="295"/>
    </location>
</feature>
<feature type="active site" description="Schiff-base intermediate with D-ribose 5-phosphate" evidence="1">
    <location>
        <position position="82"/>
    </location>
</feature>
<feature type="binding site" evidence="1">
    <location>
        <position position="25"/>
    </location>
    <ligand>
        <name>D-ribose 5-phosphate</name>
        <dbReference type="ChEBI" id="CHEBI:78346"/>
    </ligand>
</feature>
<feature type="binding site" evidence="1">
    <location>
        <position position="154"/>
    </location>
    <ligand>
        <name>D-ribose 5-phosphate</name>
        <dbReference type="ChEBI" id="CHEBI:78346"/>
    </ligand>
</feature>
<feature type="binding site" evidence="1">
    <location>
        <position position="166"/>
    </location>
    <ligand>
        <name>D-glyceraldehyde 3-phosphate</name>
        <dbReference type="ChEBI" id="CHEBI:59776"/>
    </ligand>
</feature>
<feature type="binding site" evidence="1">
    <location>
        <position position="215"/>
    </location>
    <ligand>
        <name>D-ribose 5-phosphate</name>
        <dbReference type="ChEBI" id="CHEBI:78346"/>
    </ligand>
</feature>
<feature type="binding site" evidence="1">
    <location>
        <begin position="236"/>
        <end position="237"/>
    </location>
    <ligand>
        <name>D-ribose 5-phosphate</name>
        <dbReference type="ChEBI" id="CHEBI:78346"/>
    </ligand>
</feature>
<name>PDXS_SHOC1</name>
<organism>
    <name type="scientific">Shouchella clausii (strain KSM-K16)</name>
    <name type="common">Alkalihalobacillus clausii</name>
    <dbReference type="NCBI Taxonomy" id="66692"/>
    <lineage>
        <taxon>Bacteria</taxon>
        <taxon>Bacillati</taxon>
        <taxon>Bacillota</taxon>
        <taxon>Bacilli</taxon>
        <taxon>Bacillales</taxon>
        <taxon>Bacillaceae</taxon>
        <taxon>Shouchella</taxon>
    </lineage>
</organism>
<gene>
    <name evidence="1" type="primary">pdxS</name>
    <name type="ordered locus">ABC0451</name>
</gene>
<accession>Q5WKW2</accession>